<reference key="1">
    <citation type="journal article" date="1996" name="Nucleic Acids Res.">
        <title>Complete sequence analysis of the genome of the bacterium Mycoplasma pneumoniae.</title>
        <authorList>
            <person name="Himmelreich R."/>
            <person name="Hilbert H."/>
            <person name="Plagens H."/>
            <person name="Pirkl E."/>
            <person name="Li B.-C."/>
            <person name="Herrmann R."/>
        </authorList>
    </citation>
    <scope>NUCLEOTIDE SEQUENCE [LARGE SCALE GENOMIC DNA]</scope>
    <source>
        <strain>ATCC 29342 / M129 / Subtype 1</strain>
    </source>
</reference>
<protein>
    <recommendedName>
        <fullName>Uncharacterized protein MG076 homolog</fullName>
    </recommendedName>
</protein>
<accession>P75555</accession>
<feature type="chain" id="PRO_0000210414" description="Uncharacterized protein MG076 homolog">
    <location>
        <begin position="1"/>
        <end position="138"/>
    </location>
</feature>
<feature type="transmembrane region" description="Helical" evidence="1">
    <location>
        <begin position="17"/>
        <end position="37"/>
    </location>
</feature>
<feature type="transmembrane region" description="Helical" evidence="1">
    <location>
        <begin position="43"/>
        <end position="63"/>
    </location>
</feature>
<feature type="transmembrane region" description="Helical" evidence="1">
    <location>
        <begin position="117"/>
        <end position="137"/>
    </location>
</feature>
<keyword id="KW-1003">Cell membrane</keyword>
<keyword id="KW-0472">Membrane</keyword>
<keyword id="KW-1185">Reference proteome</keyword>
<keyword id="KW-0812">Transmembrane</keyword>
<keyword id="KW-1133">Transmembrane helix</keyword>
<name>Y214_MYCPN</name>
<proteinExistence type="predicted"/>
<dbReference type="EMBL" id="U00089">
    <property type="protein sequence ID" value="AAB96265.1"/>
    <property type="molecule type" value="Genomic_DNA"/>
</dbReference>
<dbReference type="PIR" id="S73943">
    <property type="entry name" value="S73943"/>
</dbReference>
<dbReference type="RefSeq" id="NP_109902.1">
    <property type="nucleotide sequence ID" value="NC_000912.1"/>
</dbReference>
<dbReference type="RefSeq" id="WP_010874571.1">
    <property type="nucleotide sequence ID" value="NZ_OU342337.1"/>
</dbReference>
<dbReference type="STRING" id="272634.MPN_214"/>
<dbReference type="EnsemblBacteria" id="AAB96265">
    <property type="protein sequence ID" value="AAB96265"/>
    <property type="gene ID" value="MPN_214"/>
</dbReference>
<dbReference type="KEGG" id="mpn:MPN_214"/>
<dbReference type="PATRIC" id="fig|272634.6.peg.233"/>
<dbReference type="HOGENOM" id="CLU_1852996_0_0_14"/>
<dbReference type="OrthoDB" id="9984030at2"/>
<dbReference type="BioCyc" id="MPNE272634:G1GJ3-345-MONOMER"/>
<dbReference type="Proteomes" id="UP000000808">
    <property type="component" value="Chromosome"/>
</dbReference>
<dbReference type="GO" id="GO:0005886">
    <property type="term" value="C:plasma membrane"/>
    <property type="evidence" value="ECO:0007669"/>
    <property type="project" value="UniProtKB-SubCell"/>
</dbReference>
<dbReference type="NCBIfam" id="NF045743">
    <property type="entry name" value="MPN214"/>
    <property type="match status" value="1"/>
</dbReference>
<sequence>MLGTQTTNSKPREYGGLIVSTIYIVLFFAILNLTVFFNKTNNINLILKNSCVVSFVVVWLLVCLQGIVRLKTCDGARYEISKFNQYLKLGSIYAKPNISFDEYKAKSSSYRKQTRGFWWMNFSLYLLGSLISIVVSLL</sequence>
<evidence type="ECO:0000255" key="1"/>
<evidence type="ECO:0000305" key="2"/>
<comment type="subcellular location">
    <subcellularLocation>
        <location evidence="2">Cell membrane</location>
        <topology evidence="2">Multi-pass membrane protein</topology>
    </subcellularLocation>
</comment>
<organism>
    <name type="scientific">Mycoplasma pneumoniae (strain ATCC 29342 / M129 / Subtype 1)</name>
    <name type="common">Mycoplasmoides pneumoniae</name>
    <dbReference type="NCBI Taxonomy" id="272634"/>
    <lineage>
        <taxon>Bacteria</taxon>
        <taxon>Bacillati</taxon>
        <taxon>Mycoplasmatota</taxon>
        <taxon>Mycoplasmoidales</taxon>
        <taxon>Mycoplasmoidaceae</taxon>
        <taxon>Mycoplasmoides</taxon>
    </lineage>
</organism>
<gene>
    <name type="ordered locus">MPN_214</name>
    <name type="ORF">G07_orf138</name>
    <name type="ORF">MP617</name>
</gene>